<accession>Q82YX0</accession>
<evidence type="ECO:0000255" key="1">
    <source>
        <dbReference type="HAMAP-Rule" id="MF_00129"/>
    </source>
</evidence>
<feature type="chain" id="PRO_0000117097" description="tRNA uridine 5-carboxymethylaminomethyl modification enzyme MnmG">
    <location>
        <begin position="1"/>
        <end position="632"/>
    </location>
</feature>
<feature type="binding site" evidence="1">
    <location>
        <begin position="15"/>
        <end position="20"/>
    </location>
    <ligand>
        <name>FAD</name>
        <dbReference type="ChEBI" id="CHEBI:57692"/>
    </ligand>
</feature>
<feature type="binding site" evidence="1">
    <location>
        <position position="127"/>
    </location>
    <ligand>
        <name>FAD</name>
        <dbReference type="ChEBI" id="CHEBI:57692"/>
    </ligand>
</feature>
<feature type="binding site" evidence="1">
    <location>
        <position position="182"/>
    </location>
    <ligand>
        <name>FAD</name>
        <dbReference type="ChEBI" id="CHEBI:57692"/>
    </ligand>
</feature>
<feature type="binding site" evidence="1">
    <location>
        <begin position="276"/>
        <end position="290"/>
    </location>
    <ligand>
        <name>NAD(+)</name>
        <dbReference type="ChEBI" id="CHEBI:57540"/>
    </ligand>
</feature>
<feature type="binding site" evidence="1">
    <location>
        <position position="373"/>
    </location>
    <ligand>
        <name>FAD</name>
        <dbReference type="ChEBI" id="CHEBI:57692"/>
    </ligand>
</feature>
<keyword id="KW-0963">Cytoplasm</keyword>
<keyword id="KW-0274">FAD</keyword>
<keyword id="KW-0285">Flavoprotein</keyword>
<keyword id="KW-0520">NAD</keyword>
<keyword id="KW-1185">Reference proteome</keyword>
<keyword id="KW-0819">tRNA processing</keyword>
<dbReference type="EMBL" id="AE016830">
    <property type="protein sequence ID" value="AAO82976.1"/>
    <property type="molecule type" value="Genomic_DNA"/>
</dbReference>
<dbReference type="RefSeq" id="NP_816906.1">
    <property type="nucleotide sequence ID" value="NC_004668.1"/>
</dbReference>
<dbReference type="RefSeq" id="WP_002355988.1">
    <property type="nucleotide sequence ID" value="NZ_KE136524.1"/>
</dbReference>
<dbReference type="SMR" id="Q82YX0"/>
<dbReference type="STRING" id="226185.EF_3311"/>
<dbReference type="EnsemblBacteria" id="AAO82976">
    <property type="protein sequence ID" value="AAO82976"/>
    <property type="gene ID" value="EF_3311"/>
</dbReference>
<dbReference type="GeneID" id="60892542"/>
<dbReference type="KEGG" id="efa:EF3311"/>
<dbReference type="PATRIC" id="fig|226185.45.peg.276"/>
<dbReference type="eggNOG" id="COG0445">
    <property type="taxonomic scope" value="Bacteria"/>
</dbReference>
<dbReference type="HOGENOM" id="CLU_007831_2_2_9"/>
<dbReference type="Proteomes" id="UP000001415">
    <property type="component" value="Chromosome"/>
</dbReference>
<dbReference type="GO" id="GO:0005829">
    <property type="term" value="C:cytosol"/>
    <property type="evidence" value="ECO:0007669"/>
    <property type="project" value="TreeGrafter"/>
</dbReference>
<dbReference type="GO" id="GO:0050660">
    <property type="term" value="F:flavin adenine dinucleotide binding"/>
    <property type="evidence" value="ECO:0007669"/>
    <property type="project" value="UniProtKB-UniRule"/>
</dbReference>
<dbReference type="GO" id="GO:0030488">
    <property type="term" value="P:tRNA methylation"/>
    <property type="evidence" value="ECO:0007669"/>
    <property type="project" value="TreeGrafter"/>
</dbReference>
<dbReference type="GO" id="GO:0002098">
    <property type="term" value="P:tRNA wobble uridine modification"/>
    <property type="evidence" value="ECO:0007669"/>
    <property type="project" value="InterPro"/>
</dbReference>
<dbReference type="FunFam" id="1.10.10.1800:FF:000001">
    <property type="entry name" value="tRNA uridine 5-carboxymethylaminomethyl modification enzyme MnmG"/>
    <property type="match status" value="1"/>
</dbReference>
<dbReference type="FunFam" id="1.10.150.570:FF:000001">
    <property type="entry name" value="tRNA uridine 5-carboxymethylaminomethyl modification enzyme MnmG"/>
    <property type="match status" value="1"/>
</dbReference>
<dbReference type="FunFam" id="3.50.50.60:FF:000002">
    <property type="entry name" value="tRNA uridine 5-carboxymethylaminomethyl modification enzyme MnmG"/>
    <property type="match status" value="1"/>
</dbReference>
<dbReference type="FunFam" id="3.50.50.60:FF:000063">
    <property type="entry name" value="tRNA uridine 5-carboxymethylaminomethyl modification enzyme MnmG"/>
    <property type="match status" value="1"/>
</dbReference>
<dbReference type="Gene3D" id="3.50.50.60">
    <property type="entry name" value="FAD/NAD(P)-binding domain"/>
    <property type="match status" value="2"/>
</dbReference>
<dbReference type="Gene3D" id="1.10.150.570">
    <property type="entry name" value="GidA associated domain, C-terminal subdomain"/>
    <property type="match status" value="1"/>
</dbReference>
<dbReference type="Gene3D" id="1.10.10.1800">
    <property type="entry name" value="tRNA uridine 5-carboxymethylaminomethyl modification enzyme MnmG/GidA"/>
    <property type="match status" value="1"/>
</dbReference>
<dbReference type="HAMAP" id="MF_00129">
    <property type="entry name" value="MnmG_GidA"/>
    <property type="match status" value="1"/>
</dbReference>
<dbReference type="InterPro" id="IPR036188">
    <property type="entry name" value="FAD/NAD-bd_sf"/>
</dbReference>
<dbReference type="InterPro" id="IPR049312">
    <property type="entry name" value="GIDA_C_N"/>
</dbReference>
<dbReference type="InterPro" id="IPR004416">
    <property type="entry name" value="MnmG"/>
</dbReference>
<dbReference type="InterPro" id="IPR002218">
    <property type="entry name" value="MnmG-rel"/>
</dbReference>
<dbReference type="InterPro" id="IPR020595">
    <property type="entry name" value="MnmG-rel_CS"/>
</dbReference>
<dbReference type="InterPro" id="IPR026904">
    <property type="entry name" value="MnmG_C"/>
</dbReference>
<dbReference type="InterPro" id="IPR047001">
    <property type="entry name" value="MnmG_C_subdom"/>
</dbReference>
<dbReference type="InterPro" id="IPR044920">
    <property type="entry name" value="MnmG_C_subdom_sf"/>
</dbReference>
<dbReference type="InterPro" id="IPR040131">
    <property type="entry name" value="MnmG_N"/>
</dbReference>
<dbReference type="NCBIfam" id="TIGR00136">
    <property type="entry name" value="mnmG_gidA"/>
    <property type="match status" value="1"/>
</dbReference>
<dbReference type="PANTHER" id="PTHR11806">
    <property type="entry name" value="GLUCOSE INHIBITED DIVISION PROTEIN A"/>
    <property type="match status" value="1"/>
</dbReference>
<dbReference type="PANTHER" id="PTHR11806:SF0">
    <property type="entry name" value="PROTEIN MTO1 HOMOLOG, MITOCHONDRIAL"/>
    <property type="match status" value="1"/>
</dbReference>
<dbReference type="Pfam" id="PF01134">
    <property type="entry name" value="GIDA"/>
    <property type="match status" value="1"/>
</dbReference>
<dbReference type="Pfam" id="PF21680">
    <property type="entry name" value="GIDA_C_1st"/>
    <property type="match status" value="1"/>
</dbReference>
<dbReference type="Pfam" id="PF13932">
    <property type="entry name" value="SAM_GIDA_C"/>
    <property type="match status" value="1"/>
</dbReference>
<dbReference type="PRINTS" id="PR00411">
    <property type="entry name" value="PNDRDTASEI"/>
</dbReference>
<dbReference type="SMART" id="SM01228">
    <property type="entry name" value="GIDA_assoc_3"/>
    <property type="match status" value="1"/>
</dbReference>
<dbReference type="SUPFAM" id="SSF51905">
    <property type="entry name" value="FAD/NAD(P)-binding domain"/>
    <property type="match status" value="1"/>
</dbReference>
<dbReference type="PROSITE" id="PS01280">
    <property type="entry name" value="GIDA_1"/>
    <property type="match status" value="1"/>
</dbReference>
<dbReference type="PROSITE" id="PS01281">
    <property type="entry name" value="GIDA_2"/>
    <property type="match status" value="1"/>
</dbReference>
<name>MNMG_ENTFA</name>
<sequence>MNQYQAESYDVIVVGAGHAGSEAALAAARMGVKTLLLTINLDMVAFMPCNPSVGGPAKGVVVREIDALGGEMGKNIDKTYIQMRMLNTGKGPAVRALRAQADKHAYATEMKHTIEKEENLTLRQGIVEELIVEDGVCRGVVTSTGAAYRSQAVVITAGTALRGEIIIGELKYSSGPNNSQPSVGLANHLKELGLEIDRFKTGTPPRVKSSTIDYSVTEEQPGDKEPNHFSYSTPDSAYNQNQEPCWLTYTNETTHEIIQKNLHRAPMFTGIVEGVGARYCPSIEDKIVRFADKPRHQLFLEPEGLNTEEVYVQGLSTSLPEDVQTEMLHSIEGLEKVEMMRTGYAIEYDVVVPHQLRPTLETKVIENLYTAGQTNGTSGYEEAAGQGLMAGINAALKIQGKEPLVLKRSDGYIGVMIDDLVTKGTNEPYRLLTSRAEYRLILRHDNADLRLTEMGHEIGLVKEEQYAAYLVKKAAVEAEIARLGKHRIKPTKEVQAFLETKGAAGLKDGILARDFLKRPEISYQEVAQFIPAPEEALDPKVIEQVEIQIKYEGYIKKAMEKVEKLKRMEAKRIPENIDYQAINGLATEAKQKLQKIQPETIAQASRISGVNPADISILMVYIEQGKIAKVQG</sequence>
<organism>
    <name type="scientific">Enterococcus faecalis (strain ATCC 700802 / V583)</name>
    <dbReference type="NCBI Taxonomy" id="226185"/>
    <lineage>
        <taxon>Bacteria</taxon>
        <taxon>Bacillati</taxon>
        <taxon>Bacillota</taxon>
        <taxon>Bacilli</taxon>
        <taxon>Lactobacillales</taxon>
        <taxon>Enterococcaceae</taxon>
        <taxon>Enterococcus</taxon>
    </lineage>
</organism>
<proteinExistence type="inferred from homology"/>
<protein>
    <recommendedName>
        <fullName evidence="1">tRNA uridine 5-carboxymethylaminomethyl modification enzyme MnmG</fullName>
    </recommendedName>
    <alternativeName>
        <fullName evidence="1">Glucose-inhibited division protein A</fullName>
    </alternativeName>
</protein>
<gene>
    <name evidence="1" type="primary">mnmG</name>
    <name evidence="1" type="synonym">gidA</name>
    <name type="ordered locus">EF_3311</name>
</gene>
<comment type="function">
    <text evidence="1">NAD-binding protein involved in the addition of a carboxymethylaminomethyl (cmnm) group at the wobble position (U34) of certain tRNAs, forming tRNA-cmnm(5)s(2)U34.</text>
</comment>
<comment type="cofactor">
    <cofactor evidence="1">
        <name>FAD</name>
        <dbReference type="ChEBI" id="CHEBI:57692"/>
    </cofactor>
</comment>
<comment type="subunit">
    <text evidence="1">Homodimer. Heterotetramer of two MnmE and two MnmG subunits.</text>
</comment>
<comment type="subcellular location">
    <subcellularLocation>
        <location evidence="1">Cytoplasm</location>
    </subcellularLocation>
</comment>
<comment type="similarity">
    <text evidence="1">Belongs to the MnmG family.</text>
</comment>
<reference key="1">
    <citation type="journal article" date="2003" name="Science">
        <title>Role of mobile DNA in the evolution of vancomycin-resistant Enterococcus faecalis.</title>
        <authorList>
            <person name="Paulsen I.T."/>
            <person name="Banerjei L."/>
            <person name="Myers G.S.A."/>
            <person name="Nelson K.E."/>
            <person name="Seshadri R."/>
            <person name="Read T.D."/>
            <person name="Fouts D.E."/>
            <person name="Eisen J.A."/>
            <person name="Gill S.R."/>
            <person name="Heidelberg J.F."/>
            <person name="Tettelin H."/>
            <person name="Dodson R.J."/>
            <person name="Umayam L.A."/>
            <person name="Brinkac L.M."/>
            <person name="Beanan M.J."/>
            <person name="Daugherty S.C."/>
            <person name="DeBoy R.T."/>
            <person name="Durkin S.A."/>
            <person name="Kolonay J.F."/>
            <person name="Madupu R."/>
            <person name="Nelson W.C."/>
            <person name="Vamathevan J.J."/>
            <person name="Tran B."/>
            <person name="Upton J."/>
            <person name="Hansen T."/>
            <person name="Shetty J."/>
            <person name="Khouri H.M."/>
            <person name="Utterback T.R."/>
            <person name="Radune D."/>
            <person name="Ketchum K.A."/>
            <person name="Dougherty B.A."/>
            <person name="Fraser C.M."/>
        </authorList>
    </citation>
    <scope>NUCLEOTIDE SEQUENCE [LARGE SCALE GENOMIC DNA]</scope>
    <source>
        <strain>ATCC 700802 / V583</strain>
    </source>
</reference>